<accession>P59489</accession>
<reference key="1">
    <citation type="journal article" date="2003" name="Proc. Natl. Acad. Sci. U.S.A.">
        <title>Reductive genome evolution in Buchnera aphidicola.</title>
        <authorList>
            <person name="van Ham R.C.H.J."/>
            <person name="Kamerbeek J."/>
            <person name="Palacios C."/>
            <person name="Rausell C."/>
            <person name="Abascal F."/>
            <person name="Bastolla U."/>
            <person name="Fernandez J.M."/>
            <person name="Jimenez L."/>
            <person name="Postigo M."/>
            <person name="Silva F.J."/>
            <person name="Tamames J."/>
            <person name="Viguera E."/>
            <person name="Latorre A."/>
            <person name="Valencia A."/>
            <person name="Moran F."/>
            <person name="Moya A."/>
        </authorList>
    </citation>
    <scope>NUCLEOTIDE SEQUENCE [LARGE SCALE GENOMIC DNA]</scope>
    <source>
        <strain>Bp</strain>
    </source>
</reference>
<gene>
    <name evidence="1" type="primary">greA</name>
    <name type="ordered locus">bbp_347</name>
</gene>
<protein>
    <recommendedName>
        <fullName evidence="1">Transcription elongation factor GreA</fullName>
    </recommendedName>
    <alternativeName>
        <fullName evidence="1">Transcript cleavage factor GreA</fullName>
    </alternativeName>
</protein>
<sequence>MNDQIPMTILGVEKLRKELEMLKTIKRPKIIKSIIEARQHGDLKENSEYHAAREEQGFCEGRIKEIELKLSKARIIDITKVKNNGVIIFGSTVTILNLTSNQEFTYRIVGDDESNFKRKLISINSPMSRGLVGKKVSDVATIKTPVGDVKYKILKIEYN</sequence>
<proteinExistence type="inferred from homology"/>
<dbReference type="EMBL" id="AE016826">
    <property type="protein sequence ID" value="AAO27066.1"/>
    <property type="molecule type" value="Genomic_DNA"/>
</dbReference>
<dbReference type="RefSeq" id="WP_011091467.1">
    <property type="nucleotide sequence ID" value="NC_004545.1"/>
</dbReference>
<dbReference type="SMR" id="P59489"/>
<dbReference type="STRING" id="224915.bbp_347"/>
<dbReference type="KEGG" id="bab:bbp_347"/>
<dbReference type="eggNOG" id="COG0782">
    <property type="taxonomic scope" value="Bacteria"/>
</dbReference>
<dbReference type="HOGENOM" id="CLU_101379_2_0_6"/>
<dbReference type="OrthoDB" id="9808774at2"/>
<dbReference type="Proteomes" id="UP000000601">
    <property type="component" value="Chromosome"/>
</dbReference>
<dbReference type="GO" id="GO:0003677">
    <property type="term" value="F:DNA binding"/>
    <property type="evidence" value="ECO:0007669"/>
    <property type="project" value="UniProtKB-UniRule"/>
</dbReference>
<dbReference type="GO" id="GO:0070063">
    <property type="term" value="F:RNA polymerase binding"/>
    <property type="evidence" value="ECO:0007669"/>
    <property type="project" value="InterPro"/>
</dbReference>
<dbReference type="GO" id="GO:0006354">
    <property type="term" value="P:DNA-templated transcription elongation"/>
    <property type="evidence" value="ECO:0007669"/>
    <property type="project" value="TreeGrafter"/>
</dbReference>
<dbReference type="GO" id="GO:0032784">
    <property type="term" value="P:regulation of DNA-templated transcription elongation"/>
    <property type="evidence" value="ECO:0007669"/>
    <property type="project" value="UniProtKB-UniRule"/>
</dbReference>
<dbReference type="FunFam" id="1.10.287.180:FF:000001">
    <property type="entry name" value="Transcription elongation factor GreA"/>
    <property type="match status" value="1"/>
</dbReference>
<dbReference type="FunFam" id="3.10.50.30:FF:000001">
    <property type="entry name" value="Transcription elongation factor GreA"/>
    <property type="match status" value="1"/>
</dbReference>
<dbReference type="Gene3D" id="3.10.50.30">
    <property type="entry name" value="Transcription elongation factor, GreA/GreB, C-terminal domain"/>
    <property type="match status" value="1"/>
</dbReference>
<dbReference type="Gene3D" id="1.10.287.180">
    <property type="entry name" value="Transcription elongation factor, GreA/GreB, N-terminal domain"/>
    <property type="match status" value="1"/>
</dbReference>
<dbReference type="HAMAP" id="MF_00105">
    <property type="entry name" value="GreA_GreB"/>
    <property type="match status" value="1"/>
</dbReference>
<dbReference type="InterPro" id="IPR036953">
    <property type="entry name" value="GreA/GreB_C_sf"/>
</dbReference>
<dbReference type="InterPro" id="IPR018151">
    <property type="entry name" value="TF_GreA/GreB_CS"/>
</dbReference>
<dbReference type="InterPro" id="IPR006359">
    <property type="entry name" value="Tscrpt_elong_fac_GreA"/>
</dbReference>
<dbReference type="InterPro" id="IPR028624">
    <property type="entry name" value="Tscrpt_elong_fac_GreA/B"/>
</dbReference>
<dbReference type="InterPro" id="IPR001437">
    <property type="entry name" value="Tscrpt_elong_fac_GreA/B_C"/>
</dbReference>
<dbReference type="InterPro" id="IPR023459">
    <property type="entry name" value="Tscrpt_elong_fac_GreA/B_fam"/>
</dbReference>
<dbReference type="InterPro" id="IPR022691">
    <property type="entry name" value="Tscrpt_elong_fac_GreA/B_N"/>
</dbReference>
<dbReference type="InterPro" id="IPR036805">
    <property type="entry name" value="Tscrpt_elong_fac_GreA/B_N_sf"/>
</dbReference>
<dbReference type="NCBIfam" id="TIGR01462">
    <property type="entry name" value="greA"/>
    <property type="match status" value="1"/>
</dbReference>
<dbReference type="NCBIfam" id="NF001261">
    <property type="entry name" value="PRK00226.1-2"/>
    <property type="match status" value="1"/>
</dbReference>
<dbReference type="NCBIfam" id="NF001263">
    <property type="entry name" value="PRK00226.1-4"/>
    <property type="match status" value="1"/>
</dbReference>
<dbReference type="NCBIfam" id="NF001264">
    <property type="entry name" value="PRK00226.1-5"/>
    <property type="match status" value="1"/>
</dbReference>
<dbReference type="PANTHER" id="PTHR30437">
    <property type="entry name" value="TRANSCRIPTION ELONGATION FACTOR GREA"/>
    <property type="match status" value="1"/>
</dbReference>
<dbReference type="PANTHER" id="PTHR30437:SF4">
    <property type="entry name" value="TRANSCRIPTION ELONGATION FACTOR GREA"/>
    <property type="match status" value="1"/>
</dbReference>
<dbReference type="Pfam" id="PF01272">
    <property type="entry name" value="GreA_GreB"/>
    <property type="match status" value="1"/>
</dbReference>
<dbReference type="Pfam" id="PF03449">
    <property type="entry name" value="GreA_GreB_N"/>
    <property type="match status" value="1"/>
</dbReference>
<dbReference type="PIRSF" id="PIRSF006092">
    <property type="entry name" value="GreA_GreB"/>
    <property type="match status" value="1"/>
</dbReference>
<dbReference type="SUPFAM" id="SSF54534">
    <property type="entry name" value="FKBP-like"/>
    <property type="match status" value="1"/>
</dbReference>
<dbReference type="SUPFAM" id="SSF46557">
    <property type="entry name" value="GreA transcript cleavage protein, N-terminal domain"/>
    <property type="match status" value="1"/>
</dbReference>
<dbReference type="PROSITE" id="PS00829">
    <property type="entry name" value="GREAB_1"/>
    <property type="match status" value="1"/>
</dbReference>
<keyword id="KW-0238">DNA-binding</keyword>
<keyword id="KW-1185">Reference proteome</keyword>
<keyword id="KW-0804">Transcription</keyword>
<keyword id="KW-0805">Transcription regulation</keyword>
<feature type="chain" id="PRO_0000176914" description="Transcription elongation factor GreA">
    <location>
        <begin position="1"/>
        <end position="159"/>
    </location>
</feature>
<name>GREA_BUCBP</name>
<comment type="function">
    <text evidence="1">Necessary for efficient RNA polymerase transcription elongation past template-encoded arresting sites. The arresting sites in DNA have the property of trapping a certain fraction of elongating RNA polymerases that pass through, resulting in locked ternary complexes. Cleavage of the nascent transcript by cleavage factors such as GreA or GreB allows the resumption of elongation from the new 3'terminus. GreA releases sequences of 2 to 3 nucleotides.</text>
</comment>
<comment type="similarity">
    <text evidence="1">Belongs to the GreA/GreB family.</text>
</comment>
<organism>
    <name type="scientific">Buchnera aphidicola subsp. Baizongia pistaciae (strain Bp)</name>
    <dbReference type="NCBI Taxonomy" id="224915"/>
    <lineage>
        <taxon>Bacteria</taxon>
        <taxon>Pseudomonadati</taxon>
        <taxon>Pseudomonadota</taxon>
        <taxon>Gammaproteobacteria</taxon>
        <taxon>Enterobacterales</taxon>
        <taxon>Erwiniaceae</taxon>
        <taxon>Buchnera</taxon>
    </lineage>
</organism>
<evidence type="ECO:0000255" key="1">
    <source>
        <dbReference type="HAMAP-Rule" id="MF_00105"/>
    </source>
</evidence>